<reference key="1">
    <citation type="submission" date="2005-09" db="EMBL/GenBank/DDBJ databases">
        <authorList>
            <consortium name="NIH - Mammalian Gene Collection (MGC) project"/>
        </authorList>
    </citation>
    <scope>NUCLEOTIDE SEQUENCE [LARGE SCALE MRNA]</scope>
    <source>
        <strain>Hereford</strain>
        <tissue>Thymus</tissue>
    </source>
</reference>
<dbReference type="EMBL" id="BC105439">
    <property type="protein sequence ID" value="AAI05440.1"/>
    <property type="molecule type" value="mRNA"/>
</dbReference>
<dbReference type="RefSeq" id="NP_001071592.1">
    <property type="nucleotide sequence ID" value="NM_001078124.2"/>
</dbReference>
<dbReference type="SMR" id="Q2HJG3"/>
<dbReference type="FunCoup" id="Q2HJG3">
    <property type="interactions" value="831"/>
</dbReference>
<dbReference type="STRING" id="9913.ENSBTAP00000017893"/>
<dbReference type="PaxDb" id="9913-ENSBTAP00000017893"/>
<dbReference type="GeneID" id="768307"/>
<dbReference type="KEGG" id="bta:768307"/>
<dbReference type="CTD" id="399"/>
<dbReference type="eggNOG" id="KOG0393">
    <property type="taxonomic scope" value="Eukaryota"/>
</dbReference>
<dbReference type="InParanoid" id="Q2HJG3"/>
<dbReference type="OrthoDB" id="8830751at2759"/>
<dbReference type="Proteomes" id="UP000009136">
    <property type="component" value="Unplaced"/>
</dbReference>
<dbReference type="GO" id="GO:0005737">
    <property type="term" value="C:cytoplasm"/>
    <property type="evidence" value="ECO:0007669"/>
    <property type="project" value="UniProtKB-SubCell"/>
</dbReference>
<dbReference type="GO" id="GO:0005886">
    <property type="term" value="C:plasma membrane"/>
    <property type="evidence" value="ECO:0000318"/>
    <property type="project" value="GO_Central"/>
</dbReference>
<dbReference type="GO" id="GO:0005525">
    <property type="term" value="F:GTP binding"/>
    <property type="evidence" value="ECO:0000318"/>
    <property type="project" value="GO_Central"/>
</dbReference>
<dbReference type="GO" id="GO:0003924">
    <property type="term" value="F:GTPase activity"/>
    <property type="evidence" value="ECO:0000318"/>
    <property type="project" value="GO_Central"/>
</dbReference>
<dbReference type="GO" id="GO:0019901">
    <property type="term" value="F:protein kinase binding"/>
    <property type="evidence" value="ECO:0000318"/>
    <property type="project" value="GO_Central"/>
</dbReference>
<dbReference type="GO" id="GO:0007015">
    <property type="term" value="P:actin filament organization"/>
    <property type="evidence" value="ECO:0000318"/>
    <property type="project" value="GO_Central"/>
</dbReference>
<dbReference type="GO" id="GO:0007165">
    <property type="term" value="P:signal transduction"/>
    <property type="evidence" value="ECO:0000318"/>
    <property type="project" value="GO_Central"/>
</dbReference>
<dbReference type="GO" id="GO:0007264">
    <property type="term" value="P:small GTPase-mediated signal transduction"/>
    <property type="evidence" value="ECO:0007669"/>
    <property type="project" value="InterPro"/>
</dbReference>
<dbReference type="CDD" id="cd00157">
    <property type="entry name" value="Rho"/>
    <property type="match status" value="1"/>
</dbReference>
<dbReference type="FunFam" id="3.40.50.300:FF:000756">
    <property type="entry name" value="Rho-related GTP-binding protein RhoH"/>
    <property type="match status" value="1"/>
</dbReference>
<dbReference type="Gene3D" id="3.40.50.300">
    <property type="entry name" value="P-loop containing nucleotide triphosphate hydrolases"/>
    <property type="match status" value="1"/>
</dbReference>
<dbReference type="InterPro" id="IPR027417">
    <property type="entry name" value="P-loop_NTPase"/>
</dbReference>
<dbReference type="InterPro" id="IPR005225">
    <property type="entry name" value="Small_GTP-bd"/>
</dbReference>
<dbReference type="InterPro" id="IPR001806">
    <property type="entry name" value="Small_GTPase"/>
</dbReference>
<dbReference type="InterPro" id="IPR003578">
    <property type="entry name" value="Small_GTPase_Rho"/>
</dbReference>
<dbReference type="NCBIfam" id="TIGR00231">
    <property type="entry name" value="small_GTP"/>
    <property type="match status" value="1"/>
</dbReference>
<dbReference type="PANTHER" id="PTHR24072">
    <property type="entry name" value="RHO FAMILY GTPASE"/>
    <property type="match status" value="1"/>
</dbReference>
<dbReference type="Pfam" id="PF00071">
    <property type="entry name" value="Ras"/>
    <property type="match status" value="1"/>
</dbReference>
<dbReference type="PRINTS" id="PR00449">
    <property type="entry name" value="RASTRNSFRMNG"/>
</dbReference>
<dbReference type="SMART" id="SM00175">
    <property type="entry name" value="RAB"/>
    <property type="match status" value="1"/>
</dbReference>
<dbReference type="SMART" id="SM00173">
    <property type="entry name" value="RAS"/>
    <property type="match status" value="1"/>
</dbReference>
<dbReference type="SMART" id="SM00174">
    <property type="entry name" value="RHO"/>
    <property type="match status" value="1"/>
</dbReference>
<dbReference type="SUPFAM" id="SSF52540">
    <property type="entry name" value="P-loop containing nucleoside triphosphate hydrolases"/>
    <property type="match status" value="1"/>
</dbReference>
<dbReference type="PROSITE" id="PS51420">
    <property type="entry name" value="RHO"/>
    <property type="match status" value="1"/>
</dbReference>
<name>RHOH_BOVIN</name>
<evidence type="ECO:0000250" key="1"/>
<evidence type="ECO:0000305" key="2"/>
<keyword id="KW-1003">Cell membrane</keyword>
<keyword id="KW-0963">Cytoplasm</keyword>
<keyword id="KW-0342">GTP-binding</keyword>
<keyword id="KW-0449">Lipoprotein</keyword>
<keyword id="KW-0472">Membrane</keyword>
<keyword id="KW-0488">Methylation</keyword>
<keyword id="KW-0547">Nucleotide-binding</keyword>
<keyword id="KW-0597">Phosphoprotein</keyword>
<keyword id="KW-0636">Prenylation</keyword>
<keyword id="KW-1185">Reference proteome</keyword>
<accession>Q2HJG3</accession>
<proteinExistence type="evidence at transcript level"/>
<comment type="function">
    <text>Binds GTP but lacks intrinsic GTPase activity and is resistant to Rho-specific GTPase-activating proteins. Inhibits the activation of NF-kappa-B by TNF and IKKB and the activation of CRK/p38 by TNF. Inhibits activities of RAC1, RHOA and CDC42. Negatively regulates leukotriene production in neutrophils. Negative regulator of hematopoietic progenitor cell proliferation, survival and migration. Critical regulator of thymocyte development and T-cell antigen receptor (TCR) signaling by mediating recruitment and activation of ZAP70. Required for phosphorylation of CD3Z, membrane translocation of ZAP70 and subsequent activation of the ZAP70-mediated pathways. Essential for efficient beta-selection and positive selection by promoting the ZAP70-dependent phosphorylation of the LAT signalosome during pre-TCR and TCR signaling. Crucial for thymocyte maturation during DN3 to DN4 transition and during positive selection. Plays critical roles in mast cell function by facilitating phosphorylation of SYK in Fc epsilon RI-mediated signal transduction. Essential for the phosphorylation of LAT, LCP2, PLCG1 and PLCG2 and for Ca(2+) mobilization in mast cells.</text>
</comment>
<comment type="subunit">
    <text evidence="1">Interacts with GDI1 and GDI2. Interacts with ZAP70 (via SH2 domains) and the interaction is enhanced by its phosphorylation by LCK. Interacts with SYK and the interaction is enhanced by its phosphorylation by FYN (By similarity).</text>
</comment>
<comment type="subcellular location">
    <subcellularLocation>
        <location evidence="1">Cytoplasm</location>
    </subcellularLocation>
    <subcellularLocation>
        <location evidence="1">Cell membrane</location>
        <topology evidence="1">Lipid-anchor</topology>
        <orientation evidence="1">Cytoplasmic side</orientation>
    </subcellularLocation>
    <text evidence="1">Colocalizes together with ZAP70 in the immunological synapse.</text>
</comment>
<comment type="domain">
    <text evidence="1">The region involved in interaction with ZAP70 is a non-canonical immunoreceptor tyrosine-based activation motif (ITAM).</text>
</comment>
<comment type="PTM">
    <text evidence="1">Phosphorylated on tyrosine by LCK. Phosphorylated by FYN. Phosphorylation enhances the interactions with ZAP70 and SYK and is critical for its function in thymocyte development (By similarity).</text>
</comment>
<comment type="similarity">
    <text evidence="2">Belongs to the small GTPase superfamily. Rho family.</text>
</comment>
<gene>
    <name type="primary">RHOH</name>
</gene>
<organism>
    <name type="scientific">Bos taurus</name>
    <name type="common">Bovine</name>
    <dbReference type="NCBI Taxonomy" id="9913"/>
    <lineage>
        <taxon>Eukaryota</taxon>
        <taxon>Metazoa</taxon>
        <taxon>Chordata</taxon>
        <taxon>Craniata</taxon>
        <taxon>Vertebrata</taxon>
        <taxon>Euteleostomi</taxon>
        <taxon>Mammalia</taxon>
        <taxon>Eutheria</taxon>
        <taxon>Laurasiatheria</taxon>
        <taxon>Artiodactyla</taxon>
        <taxon>Ruminantia</taxon>
        <taxon>Pecora</taxon>
        <taxon>Bovidae</taxon>
        <taxon>Bovinae</taxon>
        <taxon>Bos</taxon>
    </lineage>
</organism>
<protein>
    <recommendedName>
        <fullName>Rho-related GTP-binding protein RhoH</fullName>
    </recommendedName>
</protein>
<sequence length="191" mass="21260">MLSSIKCVLVGDSAVGKTSLLVRFTSETFPEAYKPTVYENTGVDVLMDGIQISLGLWDTAGNDAFRSIRPLSYQQADVVLMCYSVANHNSFLNLKNKWIGEVRSNLPCTPVLVVATQTDQREVGPHRASCVNAIEGKRLAQDVRAKGYLECSALSNRGVQQVFECAVRTAVNQARRRNRRRFFSINECKIL</sequence>
<feature type="chain" id="PRO_0000284914" description="Rho-related GTP-binding protein RhoH">
    <location>
        <begin position="1"/>
        <end position="188"/>
    </location>
</feature>
<feature type="propeptide" id="PRO_0000284915" description="Removed in mature form" evidence="1">
    <location>
        <begin position="189"/>
        <end position="191"/>
    </location>
</feature>
<feature type="region of interest" description="Interaction with ZAP70" evidence="1">
    <location>
        <begin position="73"/>
        <end position="86"/>
    </location>
</feature>
<feature type="short sequence motif" description="Effector region" evidence="1">
    <location>
        <begin position="33"/>
        <end position="41"/>
    </location>
</feature>
<feature type="binding site" evidence="1">
    <location>
        <begin position="11"/>
        <end position="18"/>
    </location>
    <ligand>
        <name>GTP</name>
        <dbReference type="ChEBI" id="CHEBI:37565"/>
    </ligand>
</feature>
<feature type="binding site" evidence="1">
    <location>
        <begin position="58"/>
        <end position="62"/>
    </location>
    <ligand>
        <name>GTP</name>
        <dbReference type="ChEBI" id="CHEBI:37565"/>
    </ligand>
</feature>
<feature type="binding site" evidence="1">
    <location>
        <begin position="116"/>
        <end position="119"/>
    </location>
    <ligand>
        <name>GTP</name>
        <dbReference type="ChEBI" id="CHEBI:37565"/>
    </ligand>
</feature>
<feature type="modified residue" description="Cysteine methyl ester" evidence="1">
    <location>
        <position position="188"/>
    </location>
</feature>
<feature type="lipid moiety-binding region" description="S-geranylgeranyl cysteine" evidence="1">
    <location>
        <position position="188"/>
    </location>
</feature>